<comment type="function">
    <text evidence="1">Escort protein required for cholesterol as well as lipid homeostasis (By similarity). Regulates export of the SCAP-SREBP complex from the endoplasmic reticulum to the Golgi upon low cholesterol, thereby regulating the processing of sterol regulatory element-binding proteins (SREBPs) SREBF1/SREBP1 and SREBF2/SREBP2 (By similarity). At high sterol concentrations, formation of a ternary complex with INSIG (INSIG1 or INSIG2) leads to mask the ER export signal in SCAP, promoting retention of the complex in the endoplasmic reticulum (By similarity). Low sterol concentrations trigger release of INSIG, a conformational change in the SSD domain of SCAP, unmasking of the ER export signal, promoting recruitment into COPII-coated vesicles and transport of the SCAP-SREBP to the Golgi: in the Golgi, SREBPs are then processed, releasing the transcription factor fragment of SREBPs from the membrane, its import into the nucleus and up-regulation of LDLR, INSIG1 and the mevalonate pathway (By similarity). Binds cholesterol via its SSD domain (By similarity).</text>
</comment>
<comment type="subunit">
    <text evidence="1 2">Membrane region forms a homotetramer (By similarity). Component of the SCAP-SREBP complex (composed of SCAP and SREBF1/SREBP1 or SREBF2/SREBP2); interacts with SREBF1/SREBP1 or SREBF2/SREBP2 through its C-terminal cytoplasmic domain (By similarity). Forms a ternary complex with INSIG1 or INSIG2 through its transmembrane domains at high sterol concentrations. Interacts with PAQR3; the interaction anchors the SCAP-SREBP complex to the Golgi apparatus in low cholesterol conditions (By similarity). Interacts with the SEC23-SEC24 complex in a SAR1-GTP-dependent manner through an ER export signal in its third cytoplasmic loop (By similarity). Interacts with RNF139; the interaction inhibits the interaction of SCAP with SEC24B and hampering the ER to Golgi transport of the SCAP-SREBP complex. Interacts with SPRING1 (By similarity).</text>
</comment>
<comment type="subcellular location">
    <subcellularLocation>
        <location evidence="2">Endoplasmic reticulum membrane</location>
        <topology evidence="4">Multi-pass membrane protein</topology>
    </subcellularLocation>
    <subcellularLocation>
        <location evidence="2">Golgi apparatus membrane</location>
        <topology evidence="4">Multi-pass membrane protein</topology>
    </subcellularLocation>
    <subcellularLocation>
        <location evidence="1">Cytoplasmic vesicle</location>
        <location evidence="1">COPII-coated vesicle membrane</location>
        <topology evidence="4">Multi-pass membrane protein</topology>
    </subcellularLocation>
    <text evidence="1 2">Moves from the endoplasmic reticulum to the Golgi in the absence of sterols. Requires the presence of SPRING1 for proper localization to endoplasmic reticulum.</text>
</comment>
<comment type="domain">
    <text evidence="1">Loop-1 binds to loop-7, enabling interaction with COPII-coated vesicles. When levels of cholesterol in the endoplasmic reticulum increase, Loop-1 binds to cholesterol instead, thereby disrupting direct binding between the two loops and preventing the SCAP-SREBP complex from exiting the endoplasmic reticulum.</text>
</comment>
<comment type="domain">
    <text evidence="1">Cholesterol bound to SSD domain of SCAP or oxysterol bound to INSIG (INSIG1 or INSIG2) leads to masking of an ER export signal (also named MELADL motif) on SCAP possibly by moving the signal further away from the ER membrane.</text>
</comment>
<comment type="PTM">
    <text evidence="3">Ubiquitinated at Lys-454 and Lys-466. RNF145 triggers ubiquitination of SCAP, likely inhibiting SCAP-SREBP complex transport to the Golgi apparatus and the subsequent processing/maturation of SREBF2/SREBP2.</text>
</comment>
<comment type="similarity">
    <text evidence="7">Belongs to the WD repeat SCAP family.</text>
</comment>
<evidence type="ECO:0000250" key="1">
    <source>
        <dbReference type="UniProtKB" id="P97260"/>
    </source>
</evidence>
<evidence type="ECO:0000250" key="2">
    <source>
        <dbReference type="UniProtKB" id="Q12770"/>
    </source>
</evidence>
<evidence type="ECO:0000250" key="3">
    <source>
        <dbReference type="UniProtKB" id="Q6GQT6"/>
    </source>
</evidence>
<evidence type="ECO:0000255" key="4"/>
<evidence type="ECO:0000255" key="5">
    <source>
        <dbReference type="PROSITE-ProRule" id="PRU00199"/>
    </source>
</evidence>
<evidence type="ECO:0000256" key="6">
    <source>
        <dbReference type="SAM" id="MobiDB-lite"/>
    </source>
</evidence>
<evidence type="ECO:0000305" key="7"/>
<evidence type="ECO:0000312" key="8">
    <source>
        <dbReference type="EMBL" id="AAI31853.1"/>
    </source>
</evidence>
<evidence type="ECO:0000312" key="9">
    <source>
        <dbReference type="RGD" id="1309378"/>
    </source>
</evidence>
<organism>
    <name type="scientific">Rattus norvegicus</name>
    <name type="common">Rat</name>
    <dbReference type="NCBI Taxonomy" id="10116"/>
    <lineage>
        <taxon>Eukaryota</taxon>
        <taxon>Metazoa</taxon>
        <taxon>Chordata</taxon>
        <taxon>Craniata</taxon>
        <taxon>Vertebrata</taxon>
        <taxon>Euteleostomi</taxon>
        <taxon>Mammalia</taxon>
        <taxon>Eutheria</taxon>
        <taxon>Euarchontoglires</taxon>
        <taxon>Glires</taxon>
        <taxon>Rodentia</taxon>
        <taxon>Myomorpha</taxon>
        <taxon>Muroidea</taxon>
        <taxon>Muridae</taxon>
        <taxon>Murinae</taxon>
        <taxon>Rattus</taxon>
    </lineage>
</organism>
<protein>
    <recommendedName>
        <fullName evidence="2">Sterol regulatory element-binding protein cleavage-activating protein</fullName>
        <shortName evidence="2">SCAP</shortName>
        <shortName evidence="2">SREBP cleavage-activating protein</shortName>
    </recommendedName>
</protein>
<proteinExistence type="evidence at transcript level"/>
<keyword id="KW-0153">Cholesterol metabolism</keyword>
<keyword id="KW-0968">Cytoplasmic vesicle</keyword>
<keyword id="KW-0256">Endoplasmic reticulum</keyword>
<keyword id="KW-0325">Glycoprotein</keyword>
<keyword id="KW-0333">Golgi apparatus</keyword>
<keyword id="KW-1017">Isopeptide bond</keyword>
<keyword id="KW-0443">Lipid metabolism</keyword>
<keyword id="KW-0446">Lipid-binding</keyword>
<keyword id="KW-0472">Membrane</keyword>
<keyword id="KW-0488">Methylation</keyword>
<keyword id="KW-0597">Phosphoprotein</keyword>
<keyword id="KW-1185">Reference proteome</keyword>
<keyword id="KW-0677">Repeat</keyword>
<keyword id="KW-0753">Steroid metabolism</keyword>
<keyword id="KW-1207">Sterol metabolism</keyword>
<keyword id="KW-0812">Transmembrane</keyword>
<keyword id="KW-1133">Transmembrane helix</keyword>
<keyword id="KW-0832">Ubl conjugation</keyword>
<keyword id="KW-0853">WD repeat</keyword>
<accession>A2RRU4</accession>
<reference evidence="8" key="1">
    <citation type="journal article" date="2004" name="Genome Res.">
        <title>The status, quality, and expansion of the NIH full-length cDNA project: the Mammalian Gene Collection (MGC).</title>
        <authorList>
            <consortium name="The MGC Project Team"/>
        </authorList>
    </citation>
    <scope>NUCLEOTIDE SEQUENCE [LARGE SCALE MRNA]</scope>
    <source>
        <tissue evidence="8">Heart</tissue>
    </source>
</reference>
<sequence length="1276" mass="139499">MTLTERLREKISQAFYNHGLLCASYPIPIILFTGLCILACCYPLLKLPLPGTGPVEFSTPVKGYSPPPADSDHKQGEPSEQPEWYVGAPVAYIQQIFVKSSVSPWHRNLLAVDVFRSPLSRAFQLVEEIRNHVLRDSSGTKSLEEVCLQVTDLLPGLRKLRSLLPEHGCLLLSPGNFWQNDWERFHADPDIIGTIHQHEPKTLQTSATLKDLLFGVPGKYSGVSLYTRKRMVSYTITLVFQRYHAKFLSSLRARLMLLHPSPNCSLRAENLVHVHFKEEIGIAELIPLVTTYIILFAYIYFSTRKIDMVKSKWGLALAAVVTVLSSLLMSVGLCTLFGLTPTLNGGEIFPYLVVVIGLENVLVLTKSVVSTPVDLEVKLRIAQGLSSESWSIMKNVATELGIILIGYFTLVPAIQEFCLFAVVGLVSDFFLQMLFFTTVLSIDIRRMELADLNKRLPPESCLPSAKPVGRPARYERQLAVRPSTPHTITLQPSSFRNLRLPKRLRVIYFLARTRLAQRLIMAGTVVWIGILVYTDPAGLRTYLAAQVTEQSPLGEGSLGPMPVPSGVLPASHPDPAFSIFPPDAPKLPENQTLPGELPEHAVPAEGVQDSRAPEVTWGPEDEELWRKLSFRHWPTLFNYYNITLAKRYISLLPVIPVTLHLNPREALEGRHPQDGRTAWAPPEPLPAGLWETGPKGPGGTQTHGDITLYKVAALGLAAGIVLVLLLLCLYRVLCPRNYGQPGGGAGRRRRGELPCDDYGYAPPETEIVPLVLRGHLMDIECLASDGMLLVSCCLAGQVCVWDAQTGDCLTRIPRPGPRRDSCGGGAFEAQENWERLSDGGKASPEEPGDSPPLRRRPRGPPPPSLFGDQPDLTCLIDTNFSVQLPPEPTQPEPRHRAGCGRSRDSGYDFSRLVQRVYQEEGLAAVHMSALRPPSPGPPLPQASQEEGTAPEKGSPPLAWAPSTAGSIWSLELQGSLIVVGRSSGRLEVWDAIEGVLCCSNEEISSGITALVFLDRRIVAARLNGSLDFFSLETHTSLSPLQFRGTPGRGSSPSSPVYSSSNTVACHLTHTVPCAHQKPITALRAAAGRLVTGSQDHTLRVFRLEDSCCLFTLQGHSGAITTVYIDQTMVLASGGQDGAICLWDVLTGSRVSHTFAHRGDVTSLTCTTSCVISSGLDDFINIWDRSTGIKLYSIQQDLGCGASLGVISDNLLVTGGQGCVSFWDLNYGDLLQTVYLGKNSEAQPARQILVLDNAAIVCNFGSELSLVYVPSVLEKLD</sequence>
<name>SCAP_RAT</name>
<feature type="chain" id="PRO_0000315872" description="Sterol regulatory element-binding protein cleavage-activating protein">
    <location>
        <begin position="1"/>
        <end position="1276"/>
    </location>
</feature>
<feature type="topological domain" description="Cytoplasmic" evidence="1">
    <location>
        <begin position="1"/>
        <end position="18"/>
    </location>
</feature>
<feature type="transmembrane region" description="Helical; Name=1" evidence="4">
    <location>
        <begin position="19"/>
        <end position="39"/>
    </location>
</feature>
<feature type="topological domain" description="Lumenal" evidence="1">
    <location>
        <begin position="40"/>
        <end position="279"/>
    </location>
</feature>
<feature type="transmembrane region" description="Helical; Name=2" evidence="4">
    <location>
        <begin position="280"/>
        <end position="300"/>
    </location>
</feature>
<feature type="topological domain" description="Cytoplasmic" evidence="1">
    <location>
        <begin position="301"/>
        <end position="312"/>
    </location>
</feature>
<feature type="transmembrane region" description="Helical; Name=3" evidence="4">
    <location>
        <begin position="313"/>
        <end position="333"/>
    </location>
</feature>
<feature type="topological domain" description="Lumenal" evidence="1">
    <location>
        <begin position="334"/>
        <end position="344"/>
    </location>
</feature>
<feature type="transmembrane region" description="Helical; Name=4" evidence="4">
    <location>
        <begin position="345"/>
        <end position="365"/>
    </location>
</feature>
<feature type="topological domain" description="Cytoplasmic" evidence="1">
    <location>
        <begin position="366"/>
        <end position="401"/>
    </location>
</feature>
<feature type="transmembrane region" description="Helical; Name=5" evidence="4">
    <location>
        <begin position="402"/>
        <end position="422"/>
    </location>
</feature>
<feature type="topological domain" description="Lumenal" evidence="1">
    <location>
        <position position="423"/>
    </location>
</feature>
<feature type="transmembrane region" description="Helical; Name=6" evidence="4">
    <location>
        <begin position="424"/>
        <end position="444"/>
    </location>
</feature>
<feature type="topological domain" description="Cytoplasmic" evidence="1">
    <location>
        <begin position="445"/>
        <end position="518"/>
    </location>
</feature>
<feature type="transmembrane region" description="Helical; Name=7" evidence="4">
    <location>
        <begin position="519"/>
        <end position="539"/>
    </location>
</feature>
<feature type="topological domain" description="Lumenal" evidence="1">
    <location>
        <begin position="540"/>
        <end position="707"/>
    </location>
</feature>
<feature type="transmembrane region" description="Helical; Name=8" evidence="4">
    <location>
        <begin position="708"/>
        <end position="728"/>
    </location>
</feature>
<feature type="topological domain" description="Cytoplasmic" evidence="1">
    <location>
        <begin position="729"/>
        <end position="1276"/>
    </location>
</feature>
<feature type="domain" description="SSD" evidence="5">
    <location>
        <begin position="284"/>
        <end position="442"/>
    </location>
</feature>
<feature type="repeat" description="WD 1" evidence="4">
    <location>
        <begin position="771"/>
        <end position="811"/>
    </location>
</feature>
<feature type="repeat" description="WD 2" evidence="4">
    <location>
        <begin position="949"/>
        <end position="999"/>
    </location>
</feature>
<feature type="repeat" description="WD 3" evidence="4">
    <location>
        <begin position="1002"/>
        <end position="1039"/>
    </location>
</feature>
<feature type="repeat" description="WD 4" evidence="4">
    <location>
        <begin position="1074"/>
        <end position="1111"/>
    </location>
</feature>
<feature type="repeat" description="WD 5" evidence="4">
    <location>
        <begin position="1114"/>
        <end position="1152"/>
    </location>
</feature>
<feature type="repeat" description="WD 6" evidence="4">
    <location>
        <begin position="1155"/>
        <end position="1192"/>
    </location>
</feature>
<feature type="repeat" description="WD 7" evidence="4">
    <location>
        <begin position="1194"/>
        <end position="1232"/>
    </location>
</feature>
<feature type="region of interest" description="Loop-1" evidence="1">
    <location>
        <begin position="46"/>
        <end position="284"/>
    </location>
</feature>
<feature type="region of interest" description="Disordered" evidence="6">
    <location>
        <begin position="60"/>
        <end position="81"/>
    </location>
</feature>
<feature type="region of interest" description="Loop-7" evidence="1">
    <location>
        <begin position="535"/>
        <end position="710"/>
    </location>
</feature>
<feature type="region of interest" description="Interaction with SREBF2" evidence="1">
    <location>
        <begin position="731"/>
        <end position="1276"/>
    </location>
</feature>
<feature type="region of interest" description="Disordered" evidence="6">
    <location>
        <begin position="834"/>
        <end position="903"/>
    </location>
</feature>
<feature type="region of interest" description="Disordered" evidence="6">
    <location>
        <begin position="928"/>
        <end position="958"/>
    </location>
</feature>
<feature type="short sequence motif" description="ER export signal" evidence="1">
    <location>
        <begin position="447"/>
        <end position="452"/>
    </location>
</feature>
<feature type="modified residue" description="Phosphoserine" evidence="2">
    <location>
        <position position="821"/>
    </location>
</feature>
<feature type="modified residue" description="Phosphoserine" evidence="2">
    <location>
        <position position="837"/>
    </location>
</feature>
<feature type="modified residue" description="Phosphoserine" evidence="3">
    <location>
        <position position="843"/>
    </location>
</feature>
<feature type="modified residue" description="Phosphoserine" evidence="2">
    <location>
        <position position="850"/>
    </location>
</feature>
<feature type="modified residue" description="Phosphoserine" evidence="2">
    <location>
        <position position="905"/>
    </location>
</feature>
<feature type="modified residue" description="Phosphoserine" evidence="2">
    <location>
        <position position="934"/>
    </location>
</feature>
<feature type="modified residue" description="Omega-N-methylarginine" evidence="3">
    <location>
        <position position="1048"/>
    </location>
</feature>
<feature type="glycosylation site" description="N-linked (GlcNAc...) asparagine" evidence="4">
    <location>
        <position position="263"/>
    </location>
</feature>
<feature type="glycosylation site" description="N-linked (GlcNAc...) asparagine" evidence="4">
    <location>
        <position position="590"/>
    </location>
</feature>
<feature type="glycosylation site" description="N-linked (GlcNAc...) asparagine" evidence="4">
    <location>
        <position position="641"/>
    </location>
</feature>
<feature type="cross-link" description="Glycyl lysine isopeptide (Lys-Gly) (interchain with G-Cter in ubiquitin)" evidence="3">
    <location>
        <position position="454"/>
    </location>
</feature>
<feature type="cross-link" description="Glycyl lysine isopeptide (Lys-Gly) (interchain with G-Cter in ubiquitin)" evidence="3">
    <location>
        <position position="466"/>
    </location>
</feature>
<gene>
    <name evidence="9" type="primary">Scap</name>
</gene>
<dbReference type="EMBL" id="BC131852">
    <property type="protein sequence ID" value="AAI31853.1"/>
    <property type="molecule type" value="mRNA"/>
</dbReference>
<dbReference type="RefSeq" id="NP_001094436.1">
    <property type="nucleotide sequence ID" value="NM_001100966.2"/>
</dbReference>
<dbReference type="RefSeq" id="XP_006243984.1">
    <property type="nucleotide sequence ID" value="XM_006243922.3"/>
</dbReference>
<dbReference type="RefSeq" id="XP_006243985.1">
    <property type="nucleotide sequence ID" value="XM_006243923.3"/>
</dbReference>
<dbReference type="RefSeq" id="XP_006243986.1">
    <property type="nucleotide sequence ID" value="XM_006243924.3"/>
</dbReference>
<dbReference type="RefSeq" id="XP_006243987.1">
    <property type="nucleotide sequence ID" value="XM_006243925.3"/>
</dbReference>
<dbReference type="RefSeq" id="XP_017451085.1">
    <property type="nucleotide sequence ID" value="XM_017595596.1"/>
</dbReference>
<dbReference type="RefSeq" id="XP_038937176.1">
    <property type="nucleotide sequence ID" value="XM_039081248.2"/>
</dbReference>
<dbReference type="RefSeq" id="XP_063121340.1">
    <property type="nucleotide sequence ID" value="XM_063265270.1"/>
</dbReference>
<dbReference type="RefSeq" id="XP_063121341.1">
    <property type="nucleotide sequence ID" value="XM_063265271.1"/>
</dbReference>
<dbReference type="SMR" id="A2RRU4"/>
<dbReference type="FunCoup" id="A2RRU4">
    <property type="interactions" value="1731"/>
</dbReference>
<dbReference type="STRING" id="10116.ENSRNOP00000028295"/>
<dbReference type="GlyCosmos" id="A2RRU4">
    <property type="glycosylation" value="3 sites, No reported glycans"/>
</dbReference>
<dbReference type="GlyGen" id="A2RRU4">
    <property type="glycosylation" value="4 sites"/>
</dbReference>
<dbReference type="iPTMnet" id="A2RRU4"/>
<dbReference type="PhosphoSitePlus" id="A2RRU4"/>
<dbReference type="PaxDb" id="10116-ENSRNOP00000028295"/>
<dbReference type="PeptideAtlas" id="A2RRU4"/>
<dbReference type="Ensembl" id="ENSRNOT00000028295.8">
    <property type="protein sequence ID" value="ENSRNOP00000028295.5"/>
    <property type="gene ID" value="ENSRNOG00000020853.8"/>
</dbReference>
<dbReference type="GeneID" id="301024"/>
<dbReference type="KEGG" id="rno:301024"/>
<dbReference type="AGR" id="RGD:1309378"/>
<dbReference type="CTD" id="22937"/>
<dbReference type="RGD" id="1309378">
    <property type="gene designation" value="Scap"/>
</dbReference>
<dbReference type="eggNOG" id="KOG1933">
    <property type="taxonomic scope" value="Eukaryota"/>
</dbReference>
<dbReference type="GeneTree" id="ENSGT00940000158130"/>
<dbReference type="HOGENOM" id="CLU_006510_0_0_1"/>
<dbReference type="InParanoid" id="A2RRU4"/>
<dbReference type="OMA" id="IMKQYNV"/>
<dbReference type="OrthoDB" id="67982at9989"/>
<dbReference type="PhylomeDB" id="A2RRU4"/>
<dbReference type="TreeFam" id="TF315236"/>
<dbReference type="Reactome" id="R-RNO-1655829">
    <property type="pathway name" value="Regulation of cholesterol biosynthesis by SREBP (SREBF)"/>
</dbReference>
<dbReference type="PRO" id="PR:A2RRU4"/>
<dbReference type="Proteomes" id="UP000002494">
    <property type="component" value="Chromosome 8"/>
</dbReference>
<dbReference type="Bgee" id="ENSRNOG00000020853">
    <property type="expression patterns" value="Expressed in ovary and 19 other cell types or tissues"/>
</dbReference>
<dbReference type="GO" id="GO:0005789">
    <property type="term" value="C:endoplasmic reticulum membrane"/>
    <property type="evidence" value="ECO:0000250"/>
    <property type="project" value="UniProtKB"/>
</dbReference>
<dbReference type="GO" id="GO:0012507">
    <property type="term" value="C:ER to Golgi transport vesicle membrane"/>
    <property type="evidence" value="ECO:0007669"/>
    <property type="project" value="UniProtKB-SubCell"/>
</dbReference>
<dbReference type="GO" id="GO:0000139">
    <property type="term" value="C:Golgi membrane"/>
    <property type="evidence" value="ECO:0000250"/>
    <property type="project" value="UniProtKB"/>
</dbReference>
<dbReference type="GO" id="GO:0032991">
    <property type="term" value="C:protein-containing complex"/>
    <property type="evidence" value="ECO:0000314"/>
    <property type="project" value="RGD"/>
</dbReference>
<dbReference type="GO" id="GO:0032936">
    <property type="term" value="C:SREBP-SCAP complex"/>
    <property type="evidence" value="ECO:0000318"/>
    <property type="project" value="GO_Central"/>
</dbReference>
<dbReference type="GO" id="GO:0044877">
    <property type="term" value="F:protein-containing complex binding"/>
    <property type="evidence" value="ECO:0000353"/>
    <property type="project" value="RGD"/>
</dbReference>
<dbReference type="GO" id="GO:0032934">
    <property type="term" value="F:sterol binding"/>
    <property type="evidence" value="ECO:0000250"/>
    <property type="project" value="UniProtKB"/>
</dbReference>
<dbReference type="GO" id="GO:0008203">
    <property type="term" value="P:cholesterol metabolic process"/>
    <property type="evidence" value="ECO:0000250"/>
    <property type="project" value="UniProtKB"/>
</dbReference>
<dbReference type="GO" id="GO:0090110">
    <property type="term" value="P:COPII-coated vesicle cargo loading"/>
    <property type="evidence" value="ECO:0000250"/>
    <property type="project" value="UniProtKB"/>
</dbReference>
<dbReference type="GO" id="GO:0006955">
    <property type="term" value="P:immune response"/>
    <property type="evidence" value="ECO:0000266"/>
    <property type="project" value="RGD"/>
</dbReference>
<dbReference type="GO" id="GO:0006629">
    <property type="term" value="P:lipid metabolic process"/>
    <property type="evidence" value="ECO:0000266"/>
    <property type="project" value="RGD"/>
</dbReference>
<dbReference type="GO" id="GO:0045542">
    <property type="term" value="P:positive regulation of cholesterol biosynthetic process"/>
    <property type="evidence" value="ECO:0000266"/>
    <property type="project" value="RGD"/>
</dbReference>
<dbReference type="GO" id="GO:0045540">
    <property type="term" value="P:regulation of cholesterol biosynthetic process"/>
    <property type="evidence" value="ECO:0000266"/>
    <property type="project" value="RGD"/>
</dbReference>
<dbReference type="GO" id="GO:0042304">
    <property type="term" value="P:regulation of fatty acid biosynthetic process"/>
    <property type="evidence" value="ECO:0000266"/>
    <property type="project" value="RGD"/>
</dbReference>
<dbReference type="GO" id="GO:0019217">
    <property type="term" value="P:regulation of fatty acid metabolic process"/>
    <property type="evidence" value="ECO:0000266"/>
    <property type="project" value="RGD"/>
</dbReference>
<dbReference type="GO" id="GO:0001666">
    <property type="term" value="P:response to hypoxia"/>
    <property type="evidence" value="ECO:0000266"/>
    <property type="project" value="RGD"/>
</dbReference>
<dbReference type="GO" id="GO:0032868">
    <property type="term" value="P:response to insulin"/>
    <property type="evidence" value="ECO:0000266"/>
    <property type="project" value="RGD"/>
</dbReference>
<dbReference type="GO" id="GO:0033552">
    <property type="term" value="P:response to vitamin B3"/>
    <property type="evidence" value="ECO:0000270"/>
    <property type="project" value="RGD"/>
</dbReference>
<dbReference type="GO" id="GO:0032933">
    <property type="term" value="P:SREBP signaling pathway"/>
    <property type="evidence" value="ECO:0000250"/>
    <property type="project" value="UniProtKB"/>
</dbReference>
<dbReference type="FunFam" id="2.130.10.10:FF:000209">
    <property type="entry name" value="sterol regulatory element-binding protein cleavage-activating protein-like"/>
    <property type="match status" value="1"/>
</dbReference>
<dbReference type="FunFam" id="2.130.10.10:FF:000391">
    <property type="entry name" value="sterol regulatory element-binding protein cleavage-activating protein-like"/>
    <property type="match status" value="1"/>
</dbReference>
<dbReference type="Gene3D" id="2.130.10.10">
    <property type="entry name" value="YVTN repeat-like/Quinoprotein amine dehydrogenase"/>
    <property type="match status" value="2"/>
</dbReference>
<dbReference type="InterPro" id="IPR057042">
    <property type="entry name" value="Beta-prop_SCAP"/>
</dbReference>
<dbReference type="InterPro" id="IPR053958">
    <property type="entry name" value="HMGCR/SNAP/NPC1-like_SSD"/>
</dbReference>
<dbReference type="InterPro" id="IPR030225">
    <property type="entry name" value="SCAP"/>
</dbReference>
<dbReference type="InterPro" id="IPR057041">
    <property type="entry name" value="SCAP_N"/>
</dbReference>
<dbReference type="InterPro" id="IPR000731">
    <property type="entry name" value="SSD"/>
</dbReference>
<dbReference type="InterPro" id="IPR015943">
    <property type="entry name" value="WD40/YVTN_repeat-like_dom_sf"/>
</dbReference>
<dbReference type="InterPro" id="IPR019775">
    <property type="entry name" value="WD40_repeat_CS"/>
</dbReference>
<dbReference type="InterPro" id="IPR036322">
    <property type="entry name" value="WD40_repeat_dom_sf"/>
</dbReference>
<dbReference type="InterPro" id="IPR001680">
    <property type="entry name" value="WD40_rpt"/>
</dbReference>
<dbReference type="PANTHER" id="PTHR46378">
    <property type="entry name" value="STEROL REGULATORY ELEMENT-BINDING PROTEIN CLEAVAGE-ACTIVATING PROTEIN"/>
    <property type="match status" value="1"/>
</dbReference>
<dbReference type="PANTHER" id="PTHR46378:SF1">
    <property type="entry name" value="STEROL REGULATORY ELEMENT-BINDING PROTEIN CLEAVAGE-ACTIVATING PROTEIN"/>
    <property type="match status" value="1"/>
</dbReference>
<dbReference type="Pfam" id="PF24017">
    <property type="entry name" value="Beta-prop_SCAP"/>
    <property type="match status" value="1"/>
</dbReference>
<dbReference type="Pfam" id="PF24006">
    <property type="entry name" value="SCAP_N"/>
    <property type="match status" value="1"/>
</dbReference>
<dbReference type="Pfam" id="PF12349">
    <property type="entry name" value="Sterol-sensing"/>
    <property type="match status" value="1"/>
</dbReference>
<dbReference type="SMART" id="SM00320">
    <property type="entry name" value="WD40"/>
    <property type="match status" value="6"/>
</dbReference>
<dbReference type="SUPFAM" id="SSF82866">
    <property type="entry name" value="Multidrug efflux transporter AcrB transmembrane domain"/>
    <property type="match status" value="1"/>
</dbReference>
<dbReference type="SUPFAM" id="SSF50978">
    <property type="entry name" value="WD40 repeat-like"/>
    <property type="match status" value="1"/>
</dbReference>
<dbReference type="PROSITE" id="PS50156">
    <property type="entry name" value="SSD"/>
    <property type="match status" value="1"/>
</dbReference>
<dbReference type="PROSITE" id="PS00678">
    <property type="entry name" value="WD_REPEATS_1"/>
    <property type="match status" value="1"/>
</dbReference>
<dbReference type="PROSITE" id="PS50082">
    <property type="entry name" value="WD_REPEATS_2"/>
    <property type="match status" value="1"/>
</dbReference>
<dbReference type="PROSITE" id="PS50294">
    <property type="entry name" value="WD_REPEATS_REGION"/>
    <property type="match status" value="1"/>
</dbReference>